<gene>
    <name evidence="1" type="primary">recA</name>
    <name type="ordered locus">BCI_0206</name>
</gene>
<comment type="function">
    <text evidence="1">Can catalyze the hydrolysis of ATP in the presence of single-stranded DNA, the ATP-dependent uptake of single-stranded DNA by duplex DNA, and the ATP-dependent hybridization of homologous single-stranded DNAs. It interacts with LexA causing its activation and leading to its autocatalytic cleavage.</text>
</comment>
<comment type="subcellular location">
    <subcellularLocation>
        <location evidence="1">Cytoplasm</location>
    </subcellularLocation>
</comment>
<comment type="similarity">
    <text evidence="1">Belongs to the RecA family.</text>
</comment>
<name>RECA_BAUCH</name>
<evidence type="ECO:0000255" key="1">
    <source>
        <dbReference type="HAMAP-Rule" id="MF_00268"/>
    </source>
</evidence>
<dbReference type="EMBL" id="CP000238">
    <property type="protein sequence ID" value="ABF13877.1"/>
    <property type="molecule type" value="Genomic_DNA"/>
</dbReference>
<dbReference type="RefSeq" id="WP_011520394.1">
    <property type="nucleotide sequence ID" value="NC_007984.1"/>
</dbReference>
<dbReference type="SMR" id="Q1LTQ3"/>
<dbReference type="STRING" id="374463.BCI_0206"/>
<dbReference type="KEGG" id="bci:BCI_0206"/>
<dbReference type="HOGENOM" id="CLU_040469_3_2_6"/>
<dbReference type="OrthoDB" id="9776733at2"/>
<dbReference type="Proteomes" id="UP000002427">
    <property type="component" value="Chromosome"/>
</dbReference>
<dbReference type="GO" id="GO:0005829">
    <property type="term" value="C:cytosol"/>
    <property type="evidence" value="ECO:0007669"/>
    <property type="project" value="TreeGrafter"/>
</dbReference>
<dbReference type="GO" id="GO:0005524">
    <property type="term" value="F:ATP binding"/>
    <property type="evidence" value="ECO:0007669"/>
    <property type="project" value="UniProtKB-UniRule"/>
</dbReference>
<dbReference type="GO" id="GO:0016887">
    <property type="term" value="F:ATP hydrolysis activity"/>
    <property type="evidence" value="ECO:0007669"/>
    <property type="project" value="InterPro"/>
</dbReference>
<dbReference type="GO" id="GO:0140664">
    <property type="term" value="F:ATP-dependent DNA damage sensor activity"/>
    <property type="evidence" value="ECO:0007669"/>
    <property type="project" value="InterPro"/>
</dbReference>
<dbReference type="GO" id="GO:0003684">
    <property type="term" value="F:damaged DNA binding"/>
    <property type="evidence" value="ECO:0007669"/>
    <property type="project" value="UniProtKB-UniRule"/>
</dbReference>
<dbReference type="GO" id="GO:0003697">
    <property type="term" value="F:single-stranded DNA binding"/>
    <property type="evidence" value="ECO:0007669"/>
    <property type="project" value="UniProtKB-UniRule"/>
</dbReference>
<dbReference type="GO" id="GO:0006310">
    <property type="term" value="P:DNA recombination"/>
    <property type="evidence" value="ECO:0007669"/>
    <property type="project" value="UniProtKB-UniRule"/>
</dbReference>
<dbReference type="GO" id="GO:0006281">
    <property type="term" value="P:DNA repair"/>
    <property type="evidence" value="ECO:0007669"/>
    <property type="project" value="UniProtKB-UniRule"/>
</dbReference>
<dbReference type="GO" id="GO:0009432">
    <property type="term" value="P:SOS response"/>
    <property type="evidence" value="ECO:0007669"/>
    <property type="project" value="UniProtKB-UniRule"/>
</dbReference>
<dbReference type="CDD" id="cd00983">
    <property type="entry name" value="RecA"/>
    <property type="match status" value="1"/>
</dbReference>
<dbReference type="FunFam" id="3.40.50.300:FF:000087">
    <property type="entry name" value="Recombinase RecA"/>
    <property type="match status" value="1"/>
</dbReference>
<dbReference type="Gene3D" id="3.40.50.300">
    <property type="entry name" value="P-loop containing nucleotide triphosphate hydrolases"/>
    <property type="match status" value="1"/>
</dbReference>
<dbReference type="HAMAP" id="MF_00268">
    <property type="entry name" value="RecA"/>
    <property type="match status" value="1"/>
</dbReference>
<dbReference type="InterPro" id="IPR003593">
    <property type="entry name" value="AAA+_ATPase"/>
</dbReference>
<dbReference type="InterPro" id="IPR013765">
    <property type="entry name" value="DNA_recomb/repair_RecA"/>
</dbReference>
<dbReference type="InterPro" id="IPR020584">
    <property type="entry name" value="DNA_recomb/repair_RecA_CS"/>
</dbReference>
<dbReference type="InterPro" id="IPR027417">
    <property type="entry name" value="P-loop_NTPase"/>
</dbReference>
<dbReference type="InterPro" id="IPR049261">
    <property type="entry name" value="RecA-like_C"/>
</dbReference>
<dbReference type="InterPro" id="IPR049428">
    <property type="entry name" value="RecA-like_N"/>
</dbReference>
<dbReference type="InterPro" id="IPR020588">
    <property type="entry name" value="RecA_ATP-bd"/>
</dbReference>
<dbReference type="InterPro" id="IPR023400">
    <property type="entry name" value="RecA_C_sf"/>
</dbReference>
<dbReference type="InterPro" id="IPR020587">
    <property type="entry name" value="RecA_monomer-monomer_interface"/>
</dbReference>
<dbReference type="NCBIfam" id="TIGR02012">
    <property type="entry name" value="tigrfam_recA"/>
    <property type="match status" value="1"/>
</dbReference>
<dbReference type="PANTHER" id="PTHR45900:SF1">
    <property type="entry name" value="MITOCHONDRIAL DNA REPAIR PROTEIN RECA HOMOLOG-RELATED"/>
    <property type="match status" value="1"/>
</dbReference>
<dbReference type="PANTHER" id="PTHR45900">
    <property type="entry name" value="RECA"/>
    <property type="match status" value="1"/>
</dbReference>
<dbReference type="Pfam" id="PF00154">
    <property type="entry name" value="RecA"/>
    <property type="match status" value="1"/>
</dbReference>
<dbReference type="Pfam" id="PF21096">
    <property type="entry name" value="RecA_C"/>
    <property type="match status" value="1"/>
</dbReference>
<dbReference type="PRINTS" id="PR00142">
    <property type="entry name" value="RECA"/>
</dbReference>
<dbReference type="SMART" id="SM00382">
    <property type="entry name" value="AAA"/>
    <property type="match status" value="1"/>
</dbReference>
<dbReference type="SUPFAM" id="SSF52540">
    <property type="entry name" value="P-loop containing nucleoside triphosphate hydrolases"/>
    <property type="match status" value="1"/>
</dbReference>
<dbReference type="SUPFAM" id="SSF54752">
    <property type="entry name" value="RecA protein, C-terminal domain"/>
    <property type="match status" value="1"/>
</dbReference>
<dbReference type="PROSITE" id="PS00321">
    <property type="entry name" value="RECA_1"/>
    <property type="match status" value="1"/>
</dbReference>
<dbReference type="PROSITE" id="PS50162">
    <property type="entry name" value="RECA_2"/>
    <property type="match status" value="1"/>
</dbReference>
<dbReference type="PROSITE" id="PS50163">
    <property type="entry name" value="RECA_3"/>
    <property type="match status" value="1"/>
</dbReference>
<keyword id="KW-0067">ATP-binding</keyword>
<keyword id="KW-0963">Cytoplasm</keyword>
<keyword id="KW-0227">DNA damage</keyword>
<keyword id="KW-0233">DNA recombination</keyword>
<keyword id="KW-0234">DNA repair</keyword>
<keyword id="KW-0238">DNA-binding</keyword>
<keyword id="KW-0547">Nucleotide-binding</keyword>
<keyword id="KW-1185">Reference proteome</keyword>
<keyword id="KW-0742">SOS response</keyword>
<proteinExistence type="inferred from homology"/>
<protein>
    <recommendedName>
        <fullName evidence="1">Protein RecA</fullName>
    </recommendedName>
    <alternativeName>
        <fullName evidence="1">Recombinase A</fullName>
    </alternativeName>
</protein>
<feature type="chain" id="PRO_1000047891" description="Protein RecA">
    <location>
        <begin position="1"/>
        <end position="350"/>
    </location>
</feature>
<feature type="binding site" evidence="1">
    <location>
        <begin position="67"/>
        <end position="74"/>
    </location>
    <ligand>
        <name>ATP</name>
        <dbReference type="ChEBI" id="CHEBI:30616"/>
    </ligand>
</feature>
<reference key="1">
    <citation type="journal article" date="2006" name="PLoS Biol.">
        <title>Metabolic complementarity and genomics of the dual bacterial symbiosis of sharpshooters.</title>
        <authorList>
            <person name="Wu D."/>
            <person name="Daugherty S.C."/>
            <person name="Van Aken S.E."/>
            <person name="Pai G.H."/>
            <person name="Watkins K.L."/>
            <person name="Khouri H."/>
            <person name="Tallon L.J."/>
            <person name="Zaborsky J.M."/>
            <person name="Dunbar H.E."/>
            <person name="Tran P.L."/>
            <person name="Moran N.A."/>
            <person name="Eisen J.A."/>
        </authorList>
    </citation>
    <scope>NUCLEOTIDE SEQUENCE [LARGE SCALE GENOMIC DNA]</scope>
</reference>
<organism>
    <name type="scientific">Baumannia cicadellinicola subsp. Homalodisca coagulata</name>
    <dbReference type="NCBI Taxonomy" id="374463"/>
    <lineage>
        <taxon>Bacteria</taxon>
        <taxon>Pseudomonadati</taxon>
        <taxon>Pseudomonadota</taxon>
        <taxon>Gammaproteobacteria</taxon>
        <taxon>Candidatus Palibaumannia</taxon>
    </lineage>
</organism>
<accession>Q1LTQ3</accession>
<sequence>MAIDENKQKALAAALSLIEKQFGTGSIMRLGEDRSMDVETISTGSLSLDIALGAGGLPMGRIVEIYGPESSGKTTLTLQVIATAQKEGKICAFIDAEHALDPIYAKNLGVDIDNLLCSQPDTGEQALEICDVLTRSGAVDVIIVDSVAALTPKAEIEGEIGDSHIGLAARMMSQAMRKLTSNLKNANTLLIFINQIRMKIGVMFGNPETTTGGNALKFYSSVRLDIRRIGSVKEGDVVVGSETRVKVVKNKVAAPFKQADFQITYGKGINIHGELVDLGVKNNLIEKAGSWYSYNGNKIGQGKNNVCNFLKYHPQLAAELDKKLREMLLHNTTRTESNSLVRDDEGTFDE</sequence>